<evidence type="ECO:0000250" key="1">
    <source>
        <dbReference type="UniProtKB" id="P0A6J3"/>
    </source>
</evidence>
<evidence type="ECO:0000255" key="2"/>
<evidence type="ECO:0000256" key="3">
    <source>
        <dbReference type="SAM" id="MobiDB-lite"/>
    </source>
</evidence>
<evidence type="ECO:0000305" key="4"/>
<proteinExistence type="inferred from homology"/>
<dbReference type="EMBL" id="U62565">
    <property type="protein sequence ID" value="AAB09531.1"/>
    <property type="molecule type" value="Genomic_DNA"/>
</dbReference>
<dbReference type="SMR" id="P72205"/>
<dbReference type="STRING" id="75985.WC39_03490"/>
<dbReference type="GO" id="GO:0005886">
    <property type="term" value="C:plasma membrane"/>
    <property type="evidence" value="ECO:0007669"/>
    <property type="project" value="UniProtKB-SubCell"/>
</dbReference>
<dbReference type="GO" id="GO:0009675">
    <property type="term" value="F:high-affinity sulfate:proton symporter activity"/>
    <property type="evidence" value="ECO:0007669"/>
    <property type="project" value="TreeGrafter"/>
</dbReference>
<dbReference type="GO" id="GO:0019344">
    <property type="term" value="P:cysteine biosynthetic process"/>
    <property type="evidence" value="ECO:0007669"/>
    <property type="project" value="UniProtKB-KW"/>
</dbReference>
<dbReference type="GO" id="GO:0000103">
    <property type="term" value="P:sulfate assimilation"/>
    <property type="evidence" value="ECO:0007669"/>
    <property type="project" value="TreeGrafter"/>
</dbReference>
<dbReference type="InterPro" id="IPR050480">
    <property type="entry name" value="CysZ_sulfate_transptr"/>
</dbReference>
<dbReference type="PANTHER" id="PTHR37468">
    <property type="entry name" value="SULFATE TRANSPORTER CYSZ"/>
    <property type="match status" value="1"/>
</dbReference>
<dbReference type="PANTHER" id="PTHR37468:SF1">
    <property type="entry name" value="SULFATE TRANSPORTER CYSZ"/>
    <property type="match status" value="1"/>
</dbReference>
<gene>
    <name type="primary">cysZ</name>
</gene>
<comment type="function">
    <text evidence="1">High affinity, high specificity proton-dependent sulfate transporter, which mediates sulfate uptake. Provides the sulfur source for the cysteine synthesis pathway.</text>
</comment>
<comment type="subcellular location">
    <subcellularLocation>
        <location evidence="1">Cell inner membrane</location>
        <topology evidence="2">Multi-pass membrane protein</topology>
    </subcellularLocation>
</comment>
<comment type="similarity">
    <text evidence="4">Belongs to the CysZ family.</text>
</comment>
<protein>
    <recommendedName>
        <fullName evidence="1">Sulfate transporter CysZ</fullName>
    </recommendedName>
</protein>
<sequence length="86" mass="9602">LNFTFGALVSLFTMIPFVNLVVMPVAVCGATALWVKEYRNFFLNNQTGEFSKADYTFTKVNSTSLSTETRTGEVSPNVRNGDIRKQ</sequence>
<keyword id="KW-0028">Amino-acid biosynthesis</keyword>
<keyword id="KW-0997">Cell inner membrane</keyword>
<keyword id="KW-1003">Cell membrane</keyword>
<keyword id="KW-0198">Cysteine biosynthesis</keyword>
<keyword id="KW-0472">Membrane</keyword>
<keyword id="KW-0764">Sulfate transport</keyword>
<keyword id="KW-0812">Transmembrane</keyword>
<keyword id="KW-1133">Transmembrane helix</keyword>
<keyword id="KW-0813">Transport</keyword>
<feature type="chain" id="PRO_0000204342" description="Sulfate transporter CysZ">
    <location>
        <begin position="1" status="less than"/>
        <end position="86"/>
    </location>
</feature>
<feature type="transmembrane region" description="Helical" evidence="2">
    <location>
        <begin position="7"/>
        <end position="27"/>
    </location>
</feature>
<feature type="region of interest" description="Disordered" evidence="3">
    <location>
        <begin position="64"/>
        <end position="86"/>
    </location>
</feature>
<feature type="compositionally biased region" description="Polar residues" evidence="3">
    <location>
        <begin position="64"/>
        <end position="78"/>
    </location>
</feature>
<feature type="non-terminal residue">
    <location>
        <position position="1"/>
    </location>
</feature>
<reference key="1">
    <citation type="submission" date="1996-10" db="EMBL/GenBank/DDBJ databases">
        <authorList>
            <person name="Graham M.R."/>
            <person name="Lo R.Y.C."/>
        </authorList>
    </citation>
    <scope>NUCLEOTIDE SEQUENCE [GENOMIC DNA]</scope>
    <source>
        <strain>Serotype A1 / ATCC 43270 / BCRC 13948</strain>
    </source>
</reference>
<accession>P72205</accession>
<name>CYSZ_MANHA</name>
<organism>
    <name type="scientific">Mannheimia haemolytica</name>
    <name type="common">Pasteurella haemolytica</name>
    <dbReference type="NCBI Taxonomy" id="75985"/>
    <lineage>
        <taxon>Bacteria</taxon>
        <taxon>Pseudomonadati</taxon>
        <taxon>Pseudomonadota</taxon>
        <taxon>Gammaproteobacteria</taxon>
        <taxon>Pasteurellales</taxon>
        <taxon>Pasteurellaceae</taxon>
        <taxon>Mannheimia</taxon>
    </lineage>
</organism>